<sequence>MTDLPDSTRWQLWIVAFGFFMQSLDTTIVNTALPSMAQSLGESPLHMHMVIVSYVLTVAVMLPASGWLADKVGVRNIFFTAIVLFTLGSLFCALSGTLNELLLARALQGVGGAMMVPVGRLTVMKIVPREQYMAAMTFVTLPGQVGPLLGPALGGLLVEYASWHWIFLINIPVGIIGAIATLMLMPNYTMQTRRFDLSGFLLLAVGMAVLTLALDGSKGTGLSPLAIAGLVAVGVVALVLYLLHARNNNRALFSLKLFRTRTFSLGLAGSFAGRIGSGMLPFMTPVFLQIGLGFSPFHAGLMMIPMVLGSMGMKRIVVQVVNRFGYRRVLVATTLGLSLVTLLFMTTALLGWYYVLPFVLFLQGMVNSTRFSSMNTLTLKDLPDNLASSGNSLLSMIMQLSMSIGVTIAGLLLGLFGSQHVSIDSGTTQTVFMYTWLSMALIIALPAFIFARVPNDTHQNVAISRRKRSAQ</sequence>
<dbReference type="EMBL" id="CU928145">
    <property type="protein sequence ID" value="CAU98205.1"/>
    <property type="molecule type" value="Genomic_DNA"/>
</dbReference>
<dbReference type="RefSeq" id="WP_000130873.1">
    <property type="nucleotide sequence ID" value="NC_011748.1"/>
</dbReference>
<dbReference type="SMR" id="B7L9V0"/>
<dbReference type="KEGG" id="eck:EC55989_2333"/>
<dbReference type="HOGENOM" id="CLU_000960_28_0_6"/>
<dbReference type="Proteomes" id="UP000000746">
    <property type="component" value="Chromosome"/>
</dbReference>
<dbReference type="GO" id="GO:0005886">
    <property type="term" value="C:plasma membrane"/>
    <property type="evidence" value="ECO:0007669"/>
    <property type="project" value="UniProtKB-SubCell"/>
</dbReference>
<dbReference type="GO" id="GO:0022857">
    <property type="term" value="F:transmembrane transporter activity"/>
    <property type="evidence" value="ECO:0007669"/>
    <property type="project" value="UniProtKB-UniRule"/>
</dbReference>
<dbReference type="CDD" id="cd17503">
    <property type="entry name" value="MFS_LmrB_MDR_like"/>
    <property type="match status" value="1"/>
</dbReference>
<dbReference type="FunFam" id="1.20.1250.20:FF:000021">
    <property type="entry name" value="Putative multidrug resistance protein MdtD"/>
    <property type="match status" value="1"/>
</dbReference>
<dbReference type="FunFam" id="1.20.1720.10:FF:000001">
    <property type="entry name" value="Putative multidrug resistance protein MdtD"/>
    <property type="match status" value="1"/>
</dbReference>
<dbReference type="Gene3D" id="1.20.1250.20">
    <property type="entry name" value="MFS general substrate transporter like domains"/>
    <property type="match status" value="1"/>
</dbReference>
<dbReference type="Gene3D" id="1.20.1720.10">
    <property type="entry name" value="Multidrug resistance protein D"/>
    <property type="match status" value="1"/>
</dbReference>
<dbReference type="HAMAP" id="MF_01577">
    <property type="entry name" value="MFS_MdtD"/>
    <property type="match status" value="1"/>
</dbReference>
<dbReference type="InterPro" id="IPR004638">
    <property type="entry name" value="EmrB-like"/>
</dbReference>
<dbReference type="InterPro" id="IPR011701">
    <property type="entry name" value="MFS"/>
</dbReference>
<dbReference type="InterPro" id="IPR020846">
    <property type="entry name" value="MFS_dom"/>
</dbReference>
<dbReference type="InterPro" id="IPR036259">
    <property type="entry name" value="MFS_trans_sf"/>
</dbReference>
<dbReference type="InterPro" id="IPR023721">
    <property type="entry name" value="Multi-R_MdtD"/>
</dbReference>
<dbReference type="NCBIfam" id="TIGR00711">
    <property type="entry name" value="efflux_EmrB"/>
    <property type="match status" value="1"/>
</dbReference>
<dbReference type="NCBIfam" id="NF007799">
    <property type="entry name" value="PRK10504.1"/>
    <property type="match status" value="1"/>
</dbReference>
<dbReference type="PANTHER" id="PTHR42718:SF46">
    <property type="entry name" value="BLR6921 PROTEIN"/>
    <property type="match status" value="1"/>
</dbReference>
<dbReference type="PANTHER" id="PTHR42718">
    <property type="entry name" value="MAJOR FACILITATOR SUPERFAMILY MULTIDRUG TRANSPORTER MFSC"/>
    <property type="match status" value="1"/>
</dbReference>
<dbReference type="Pfam" id="PF07690">
    <property type="entry name" value="MFS_1"/>
    <property type="match status" value="1"/>
</dbReference>
<dbReference type="PRINTS" id="PR01036">
    <property type="entry name" value="TCRTETB"/>
</dbReference>
<dbReference type="SUPFAM" id="SSF103473">
    <property type="entry name" value="MFS general substrate transporter"/>
    <property type="match status" value="1"/>
</dbReference>
<dbReference type="PROSITE" id="PS50850">
    <property type="entry name" value="MFS"/>
    <property type="match status" value="1"/>
</dbReference>
<proteinExistence type="inferred from homology"/>
<comment type="subcellular location">
    <subcellularLocation>
        <location evidence="1">Cell inner membrane</location>
        <topology evidence="1">Multi-pass membrane protein</topology>
    </subcellularLocation>
</comment>
<comment type="similarity">
    <text evidence="1">Belongs to the major facilitator superfamily. TCR/Tet family.</text>
</comment>
<protein>
    <recommendedName>
        <fullName evidence="1">Putative multidrug resistance protein MdtD</fullName>
    </recommendedName>
</protein>
<name>MDTD_ECO55</name>
<accession>B7L9V0</accession>
<keyword id="KW-0997">Cell inner membrane</keyword>
<keyword id="KW-1003">Cell membrane</keyword>
<keyword id="KW-0472">Membrane</keyword>
<keyword id="KW-1185">Reference proteome</keyword>
<keyword id="KW-0812">Transmembrane</keyword>
<keyword id="KW-1133">Transmembrane helix</keyword>
<keyword id="KW-0813">Transport</keyword>
<organism>
    <name type="scientific">Escherichia coli (strain 55989 / EAEC)</name>
    <dbReference type="NCBI Taxonomy" id="585055"/>
    <lineage>
        <taxon>Bacteria</taxon>
        <taxon>Pseudomonadati</taxon>
        <taxon>Pseudomonadota</taxon>
        <taxon>Gammaproteobacteria</taxon>
        <taxon>Enterobacterales</taxon>
        <taxon>Enterobacteriaceae</taxon>
        <taxon>Escherichia</taxon>
    </lineage>
</organism>
<feature type="chain" id="PRO_1000185635" description="Putative multidrug resistance protein MdtD">
    <location>
        <begin position="1"/>
        <end position="471"/>
    </location>
</feature>
<feature type="topological domain" description="Periplasmic" evidence="1">
    <location>
        <begin position="1"/>
        <end position="11"/>
    </location>
</feature>
<feature type="transmembrane region" description="Helical" evidence="1">
    <location>
        <begin position="12"/>
        <end position="32"/>
    </location>
</feature>
<feature type="topological domain" description="Cytoplasmic" evidence="1">
    <location>
        <begin position="33"/>
        <end position="48"/>
    </location>
</feature>
<feature type="transmembrane region" description="Helical" evidence="1">
    <location>
        <begin position="49"/>
        <end position="69"/>
    </location>
</feature>
<feature type="topological domain" description="Periplasmic" evidence="1">
    <location>
        <begin position="70"/>
        <end position="76"/>
    </location>
</feature>
<feature type="transmembrane region" description="Helical" evidence="1">
    <location>
        <begin position="77"/>
        <end position="97"/>
    </location>
</feature>
<feature type="topological domain" description="Cytoplasmic" evidence="1">
    <location>
        <begin position="98"/>
        <end position="101"/>
    </location>
</feature>
<feature type="transmembrane region" description="Helical" evidence="1">
    <location>
        <begin position="102"/>
        <end position="124"/>
    </location>
</feature>
<feature type="topological domain" description="Periplasmic" evidence="1">
    <location>
        <begin position="125"/>
        <end position="137"/>
    </location>
</feature>
<feature type="transmembrane region" description="Helical" evidence="1">
    <location>
        <begin position="138"/>
        <end position="158"/>
    </location>
</feature>
<feature type="topological domain" description="Cytoplasmic" evidence="1">
    <location>
        <begin position="159"/>
        <end position="164"/>
    </location>
</feature>
<feature type="transmembrane region" description="Helical" evidence="1">
    <location>
        <begin position="165"/>
        <end position="185"/>
    </location>
</feature>
<feature type="topological domain" description="Periplasmic" evidence="1">
    <location>
        <begin position="186"/>
        <end position="196"/>
    </location>
</feature>
<feature type="transmembrane region" description="Helical" evidence="1">
    <location>
        <begin position="197"/>
        <end position="217"/>
    </location>
</feature>
<feature type="topological domain" description="Cytoplasmic" evidence="1">
    <location>
        <begin position="218"/>
        <end position="224"/>
    </location>
</feature>
<feature type="transmembrane region" description="Helical" evidence="1">
    <location>
        <begin position="225"/>
        <end position="245"/>
    </location>
</feature>
<feature type="topological domain" description="Periplasmic" evidence="1">
    <location>
        <begin position="246"/>
        <end position="262"/>
    </location>
</feature>
<feature type="transmembrane region" description="Helical" evidence="1">
    <location>
        <begin position="263"/>
        <end position="283"/>
    </location>
</feature>
<feature type="topological domain" description="Cytoplasmic" evidence="1">
    <location>
        <begin position="284"/>
        <end position="285"/>
    </location>
</feature>
<feature type="transmembrane region" description="Helical" evidence="1">
    <location>
        <begin position="286"/>
        <end position="306"/>
    </location>
</feature>
<feature type="topological domain" description="Periplasmic" evidence="1">
    <location>
        <begin position="307"/>
        <end position="341"/>
    </location>
</feature>
<feature type="transmembrane region" description="Helical" evidence="1">
    <location>
        <begin position="342"/>
        <end position="362"/>
    </location>
</feature>
<feature type="topological domain" description="Cytoplasmic" evidence="1">
    <location>
        <begin position="363"/>
        <end position="395"/>
    </location>
</feature>
<feature type="transmembrane region" description="Helical" evidence="1">
    <location>
        <begin position="396"/>
        <end position="416"/>
    </location>
</feature>
<feature type="topological domain" description="Periplasmic" evidence="1">
    <location>
        <begin position="417"/>
        <end position="430"/>
    </location>
</feature>
<feature type="transmembrane region" description="Helical" evidence="1">
    <location>
        <begin position="431"/>
        <end position="451"/>
    </location>
</feature>
<feature type="topological domain" description="Cytoplasmic" evidence="1">
    <location>
        <begin position="452"/>
        <end position="471"/>
    </location>
</feature>
<evidence type="ECO:0000255" key="1">
    <source>
        <dbReference type="HAMAP-Rule" id="MF_01577"/>
    </source>
</evidence>
<gene>
    <name evidence="1" type="primary">mdtD</name>
    <name type="ordered locus">EC55989_2333</name>
</gene>
<reference key="1">
    <citation type="journal article" date="2009" name="PLoS Genet.">
        <title>Organised genome dynamics in the Escherichia coli species results in highly diverse adaptive paths.</title>
        <authorList>
            <person name="Touchon M."/>
            <person name="Hoede C."/>
            <person name="Tenaillon O."/>
            <person name="Barbe V."/>
            <person name="Baeriswyl S."/>
            <person name="Bidet P."/>
            <person name="Bingen E."/>
            <person name="Bonacorsi S."/>
            <person name="Bouchier C."/>
            <person name="Bouvet O."/>
            <person name="Calteau A."/>
            <person name="Chiapello H."/>
            <person name="Clermont O."/>
            <person name="Cruveiller S."/>
            <person name="Danchin A."/>
            <person name="Diard M."/>
            <person name="Dossat C."/>
            <person name="Karoui M.E."/>
            <person name="Frapy E."/>
            <person name="Garry L."/>
            <person name="Ghigo J.M."/>
            <person name="Gilles A.M."/>
            <person name="Johnson J."/>
            <person name="Le Bouguenec C."/>
            <person name="Lescat M."/>
            <person name="Mangenot S."/>
            <person name="Martinez-Jehanne V."/>
            <person name="Matic I."/>
            <person name="Nassif X."/>
            <person name="Oztas S."/>
            <person name="Petit M.A."/>
            <person name="Pichon C."/>
            <person name="Rouy Z."/>
            <person name="Ruf C.S."/>
            <person name="Schneider D."/>
            <person name="Tourret J."/>
            <person name="Vacherie B."/>
            <person name="Vallenet D."/>
            <person name="Medigue C."/>
            <person name="Rocha E.P.C."/>
            <person name="Denamur E."/>
        </authorList>
    </citation>
    <scope>NUCLEOTIDE SEQUENCE [LARGE SCALE GENOMIC DNA]</scope>
    <source>
        <strain>55989 / EAEC</strain>
    </source>
</reference>